<name>GLYM_PEA</name>
<organism>
    <name type="scientific">Pisum sativum</name>
    <name type="common">Garden pea</name>
    <name type="synonym">Lathyrus oleraceus</name>
    <dbReference type="NCBI Taxonomy" id="3888"/>
    <lineage>
        <taxon>Eukaryota</taxon>
        <taxon>Viridiplantae</taxon>
        <taxon>Streptophyta</taxon>
        <taxon>Embryophyta</taxon>
        <taxon>Tracheophyta</taxon>
        <taxon>Spermatophyta</taxon>
        <taxon>Magnoliopsida</taxon>
        <taxon>eudicotyledons</taxon>
        <taxon>Gunneridae</taxon>
        <taxon>Pentapetalae</taxon>
        <taxon>rosids</taxon>
        <taxon>fabids</taxon>
        <taxon>Fabales</taxon>
        <taxon>Fabaceae</taxon>
        <taxon>Papilionoideae</taxon>
        <taxon>50 kb inversion clade</taxon>
        <taxon>NPAAA clade</taxon>
        <taxon>Hologalegina</taxon>
        <taxon>IRL clade</taxon>
        <taxon>Fabeae</taxon>
        <taxon>Pisum</taxon>
    </lineage>
</organism>
<comment type="function">
    <text>Catalyzes the interconversion of serine and glycine.</text>
</comment>
<comment type="catalytic activity">
    <reaction>
        <text>(6R)-5,10-methylene-5,6,7,8-tetrahydrofolate + glycine + H2O = (6S)-5,6,7,8-tetrahydrofolate + L-serine</text>
        <dbReference type="Rhea" id="RHEA:15481"/>
        <dbReference type="ChEBI" id="CHEBI:15377"/>
        <dbReference type="ChEBI" id="CHEBI:15636"/>
        <dbReference type="ChEBI" id="CHEBI:33384"/>
        <dbReference type="ChEBI" id="CHEBI:57305"/>
        <dbReference type="ChEBI" id="CHEBI:57453"/>
        <dbReference type="EC" id="2.1.2.1"/>
    </reaction>
</comment>
<comment type="cofactor">
    <cofactor evidence="1">
        <name>pyridoxal 5'-phosphate</name>
        <dbReference type="ChEBI" id="CHEBI:597326"/>
    </cofactor>
</comment>
<comment type="pathway">
    <text>One-carbon metabolism; tetrahydrofolate interconversion.</text>
</comment>
<comment type="subunit">
    <text evidence="1">Homotetramer.</text>
</comment>
<comment type="subcellular location">
    <subcellularLocation>
        <location>Mitochondrion</location>
    </subcellularLocation>
</comment>
<comment type="similarity">
    <text evidence="2">Belongs to the SHMT family.</text>
</comment>
<protein>
    <recommendedName>
        <fullName>Serine hydroxymethyltransferase, mitochondrial</fullName>
        <shortName>SHMT</shortName>
        <ecNumber>2.1.2.1</ecNumber>
    </recommendedName>
    <alternativeName>
        <fullName>Glycine hydroxymethyltransferase</fullName>
    </alternativeName>
    <alternativeName>
        <fullName>Serine methylase</fullName>
    </alternativeName>
</protein>
<accession>P34899</accession>
<feature type="transit peptide" description="Mitochondrion">
    <location>
        <begin position="1"/>
        <end position="31"/>
    </location>
</feature>
<feature type="chain" id="PRO_0000032570" description="Serine hydroxymethyltransferase, mitochondrial">
    <location>
        <begin position="32"/>
        <end position="518"/>
    </location>
</feature>
<feature type="modified residue" description="N6-(pyridoxal phosphate)lysine" evidence="1">
    <location>
        <position position="287"/>
    </location>
</feature>
<dbReference type="EC" id="2.1.2.1"/>
<dbReference type="EMBL" id="M87649">
    <property type="protein sequence ID" value="AAA33687.1"/>
    <property type="molecule type" value="mRNA"/>
</dbReference>
<dbReference type="PIR" id="A42906">
    <property type="entry name" value="A42906"/>
</dbReference>
<dbReference type="RefSeq" id="NP_001414320.1">
    <property type="nucleotide sequence ID" value="NM_001427391.1"/>
</dbReference>
<dbReference type="SMR" id="P34899"/>
<dbReference type="IntAct" id="P34899">
    <property type="interactions" value="1"/>
</dbReference>
<dbReference type="EnsemblPlants" id="Psat2g133920.1">
    <property type="protein sequence ID" value="Psat2g133920.1.cds"/>
    <property type="gene ID" value="Psat2g133920"/>
</dbReference>
<dbReference type="GeneID" id="127119706"/>
<dbReference type="Gramene" id="Psat2g133920.1">
    <property type="protein sequence ID" value="Psat2g133920.1.cds"/>
    <property type="gene ID" value="Psat2g133920"/>
</dbReference>
<dbReference type="OrthoDB" id="10265628at2759"/>
<dbReference type="UniPathway" id="UPA00193"/>
<dbReference type="GO" id="GO:0005739">
    <property type="term" value="C:mitochondrion"/>
    <property type="evidence" value="ECO:0007669"/>
    <property type="project" value="UniProtKB-SubCell"/>
</dbReference>
<dbReference type="GO" id="GO:0004372">
    <property type="term" value="F:glycine hydroxymethyltransferase activity"/>
    <property type="evidence" value="ECO:0007669"/>
    <property type="project" value="UniProtKB-EC"/>
</dbReference>
<dbReference type="GO" id="GO:0030170">
    <property type="term" value="F:pyridoxal phosphate binding"/>
    <property type="evidence" value="ECO:0007669"/>
    <property type="project" value="InterPro"/>
</dbReference>
<dbReference type="GO" id="GO:0019264">
    <property type="term" value="P:glycine biosynthetic process from serine"/>
    <property type="evidence" value="ECO:0007669"/>
    <property type="project" value="InterPro"/>
</dbReference>
<dbReference type="GO" id="GO:0035999">
    <property type="term" value="P:tetrahydrofolate interconversion"/>
    <property type="evidence" value="ECO:0007669"/>
    <property type="project" value="UniProtKB-UniPathway"/>
</dbReference>
<dbReference type="CDD" id="cd00378">
    <property type="entry name" value="SHMT"/>
    <property type="match status" value="1"/>
</dbReference>
<dbReference type="FunFam" id="3.40.640.10:FF:000050">
    <property type="entry name" value="Serine hydroxymethyltransferase"/>
    <property type="match status" value="1"/>
</dbReference>
<dbReference type="FunFam" id="3.90.1150.10:FF:000005">
    <property type="entry name" value="Serine hydroxymethyltransferase"/>
    <property type="match status" value="1"/>
</dbReference>
<dbReference type="Gene3D" id="3.90.1150.10">
    <property type="entry name" value="Aspartate Aminotransferase, domain 1"/>
    <property type="match status" value="1"/>
</dbReference>
<dbReference type="Gene3D" id="3.40.640.10">
    <property type="entry name" value="Type I PLP-dependent aspartate aminotransferase-like (Major domain)"/>
    <property type="match status" value="1"/>
</dbReference>
<dbReference type="HAMAP" id="MF_00051">
    <property type="entry name" value="SHMT"/>
    <property type="match status" value="1"/>
</dbReference>
<dbReference type="InterPro" id="IPR015424">
    <property type="entry name" value="PyrdxlP-dep_Trfase"/>
</dbReference>
<dbReference type="InterPro" id="IPR015421">
    <property type="entry name" value="PyrdxlP-dep_Trfase_major"/>
</dbReference>
<dbReference type="InterPro" id="IPR015422">
    <property type="entry name" value="PyrdxlP-dep_Trfase_small"/>
</dbReference>
<dbReference type="InterPro" id="IPR001085">
    <property type="entry name" value="Ser_HO-MeTrfase"/>
</dbReference>
<dbReference type="InterPro" id="IPR049943">
    <property type="entry name" value="Ser_HO-MeTrfase-like"/>
</dbReference>
<dbReference type="InterPro" id="IPR019798">
    <property type="entry name" value="Ser_HO-MeTrfase_PLP_BS"/>
</dbReference>
<dbReference type="InterPro" id="IPR039429">
    <property type="entry name" value="SHMT-like_dom"/>
</dbReference>
<dbReference type="NCBIfam" id="NF000586">
    <property type="entry name" value="PRK00011.1"/>
    <property type="match status" value="1"/>
</dbReference>
<dbReference type="PANTHER" id="PTHR11680">
    <property type="entry name" value="SERINE HYDROXYMETHYLTRANSFERASE"/>
    <property type="match status" value="1"/>
</dbReference>
<dbReference type="PANTHER" id="PTHR11680:SF61">
    <property type="entry name" value="SERINE HYDROXYMETHYLTRANSFERASE 1, MITOCHONDRIAL"/>
    <property type="match status" value="1"/>
</dbReference>
<dbReference type="Pfam" id="PF00464">
    <property type="entry name" value="SHMT"/>
    <property type="match status" value="1"/>
</dbReference>
<dbReference type="PIRSF" id="PIRSF000412">
    <property type="entry name" value="SHMT"/>
    <property type="match status" value="1"/>
</dbReference>
<dbReference type="SUPFAM" id="SSF53383">
    <property type="entry name" value="PLP-dependent transferases"/>
    <property type="match status" value="1"/>
</dbReference>
<dbReference type="PROSITE" id="PS00096">
    <property type="entry name" value="SHMT"/>
    <property type="match status" value="1"/>
</dbReference>
<proteinExistence type="evidence at protein level"/>
<reference key="1">
    <citation type="journal article" date="1992" name="J. Biol. Chem.">
        <title>Identification and localization of multiple forms of serine hydroxymethyltransferase in pea (Pisum sativum) and characterization of a cDNA encoding a mitochondrial isoform.</title>
        <authorList>
            <person name="Turner S.R."/>
            <person name="Ireland R."/>
            <person name="Morgan C."/>
            <person name="Rawsthorne S."/>
        </authorList>
    </citation>
    <scope>NUCLEOTIDE SEQUENCE [MRNA]</scope>
    <scope>PARTIAL PROTEIN SEQUENCE</scope>
</reference>
<keyword id="KW-0903">Direct protein sequencing</keyword>
<keyword id="KW-0496">Mitochondrion</keyword>
<keyword id="KW-0554">One-carbon metabolism</keyword>
<keyword id="KW-0663">Pyridoxal phosphate</keyword>
<keyword id="KW-0808">Transferase</keyword>
<keyword id="KW-0809">Transit peptide</keyword>
<sequence>MAMAMALRKLSSSVNKSSRPLFSASSLYYKSSLPDEAVYDKENPRVTWPKQLNSPLEVIDPEIADIIELEKARQWKGLELIPSENFTSLSVMQAVGSVMTNKYSEGYPGARYYGGNEYIDMAETLCQKRALEAFRLDPAKWGVNVQPLSGSPSNFQVYTALLKPHDRIMALDLPHGGHLSHGYQTDTKKISAVSIFFETMPYRLDESTGYIDYDQLEKSATLFRPKLIVAGASAYARLYDYARIRKVCDKQKAVLLADMAHISGLVAAGVIPSPFDYADVVTTTTHKSLRGPRGAMIFFRKGLKEVNKQGKEVFYDYEDKINQAVFPGLQGGPHNHTITGLAVALKQATTPEYRAYQEQVLSNSSKFAKALSEKGYDLVSGGTENHLVLVNLKNKGIDGSRVEKVLELVHIAANKNTVPGDVSAMVPGGIRMGTPALTSRGFVEEDFVKVAEYFDAAVSLALKVKAESKGTKLKDFVEALQTSSYVQSEISKLKHDVEEFAKQFPTIGFEKATMKYNK</sequence>
<evidence type="ECO:0000250" key="1"/>
<evidence type="ECO:0000305" key="2"/>